<dbReference type="EMBL" id="X77752">
    <property type="protein sequence ID" value="CAA54798.1"/>
    <property type="molecule type" value="Genomic_DNA"/>
</dbReference>
<dbReference type="EMBL" id="AF184103">
    <property type="protein sequence ID" value="AAF01234.1"/>
    <property type="molecule type" value="Genomic_DNA"/>
</dbReference>
<dbReference type="EMBL" id="AF184099">
    <property type="protein sequence ID" value="AAF01230.1"/>
    <property type="molecule type" value="Genomic_DNA"/>
</dbReference>
<dbReference type="EMBL" id="AF184104">
    <property type="protein sequence ID" value="AAF01235.1"/>
    <property type="molecule type" value="Genomic_DNA"/>
</dbReference>
<dbReference type="EMBL" id="AF184098">
    <property type="protein sequence ID" value="AAF01229.1"/>
    <property type="molecule type" value="Genomic_DNA"/>
</dbReference>
<dbReference type="EMBL" id="AF184097">
    <property type="protein sequence ID" value="AAF01228.1"/>
    <property type="molecule type" value="Genomic_DNA"/>
</dbReference>
<dbReference type="EMBL" id="AE006468">
    <property type="protein sequence ID" value="AAL21804.1"/>
    <property type="molecule type" value="Genomic_DNA"/>
</dbReference>
<dbReference type="PIR" id="S47534">
    <property type="entry name" value="S47534"/>
</dbReference>
<dbReference type="RefSeq" id="NP_461845.1">
    <property type="nucleotide sequence ID" value="NC_003197.2"/>
</dbReference>
<dbReference type="RefSeq" id="WP_000081498.1">
    <property type="nucleotide sequence ID" value="NC_003197.2"/>
</dbReference>
<dbReference type="SMR" id="P0DM81"/>
<dbReference type="STRING" id="99287.STM2924"/>
<dbReference type="PaxDb" id="99287-STM2924"/>
<dbReference type="GeneID" id="1254447"/>
<dbReference type="GeneID" id="89547518"/>
<dbReference type="KEGG" id="stm:STM2924"/>
<dbReference type="PATRIC" id="fig|99287.12.peg.3078"/>
<dbReference type="HOGENOM" id="CLU_014793_3_5_6"/>
<dbReference type="OMA" id="RVQREFN"/>
<dbReference type="PhylomeDB" id="P0DM81"/>
<dbReference type="BioCyc" id="SENT99287:STM2924-MONOMER"/>
<dbReference type="PHI-base" id="PHI:2683"/>
<dbReference type="PRO" id="PR:P0DM81"/>
<dbReference type="Proteomes" id="UP000001014">
    <property type="component" value="Chromosome"/>
</dbReference>
<dbReference type="GO" id="GO:0005737">
    <property type="term" value="C:cytoplasm"/>
    <property type="evidence" value="ECO:0007669"/>
    <property type="project" value="UniProtKB-SubCell"/>
</dbReference>
<dbReference type="GO" id="GO:0003677">
    <property type="term" value="F:DNA binding"/>
    <property type="evidence" value="ECO:0007669"/>
    <property type="project" value="UniProtKB-UniRule"/>
</dbReference>
<dbReference type="GO" id="GO:0016987">
    <property type="term" value="F:sigma factor activity"/>
    <property type="evidence" value="ECO:0007669"/>
    <property type="project" value="UniProtKB-UniRule"/>
</dbReference>
<dbReference type="GO" id="GO:0006352">
    <property type="term" value="P:DNA-templated transcription initiation"/>
    <property type="evidence" value="ECO:0007669"/>
    <property type="project" value="UniProtKB-UniRule"/>
</dbReference>
<dbReference type="CDD" id="cd06171">
    <property type="entry name" value="Sigma70_r4"/>
    <property type="match status" value="1"/>
</dbReference>
<dbReference type="FunFam" id="1.10.10.10:FF:000044">
    <property type="entry name" value="RNA polymerase sigma factor RpoS"/>
    <property type="match status" value="1"/>
</dbReference>
<dbReference type="FunFam" id="1.10.10.10:FF:000046">
    <property type="entry name" value="RNA polymerase sigma factor RpoS"/>
    <property type="match status" value="1"/>
</dbReference>
<dbReference type="FunFam" id="1.10.601.10:FF:000001">
    <property type="entry name" value="RNA polymerase sigma factor SigA"/>
    <property type="match status" value="1"/>
</dbReference>
<dbReference type="Gene3D" id="1.10.601.10">
    <property type="entry name" value="RNA Polymerase Primary Sigma Factor"/>
    <property type="match status" value="1"/>
</dbReference>
<dbReference type="Gene3D" id="1.10.10.10">
    <property type="entry name" value="Winged helix-like DNA-binding domain superfamily/Winged helix DNA-binding domain"/>
    <property type="match status" value="2"/>
</dbReference>
<dbReference type="HAMAP" id="MF_00959">
    <property type="entry name" value="Sigma70_RpoS"/>
    <property type="match status" value="1"/>
</dbReference>
<dbReference type="InterPro" id="IPR014284">
    <property type="entry name" value="RNA_pol_sigma-70_dom"/>
</dbReference>
<dbReference type="InterPro" id="IPR000943">
    <property type="entry name" value="RNA_pol_sigma70"/>
</dbReference>
<dbReference type="InterPro" id="IPR009042">
    <property type="entry name" value="RNA_pol_sigma70_r1_2"/>
</dbReference>
<dbReference type="InterPro" id="IPR007627">
    <property type="entry name" value="RNA_pol_sigma70_r2"/>
</dbReference>
<dbReference type="InterPro" id="IPR007624">
    <property type="entry name" value="RNA_pol_sigma70_r3"/>
</dbReference>
<dbReference type="InterPro" id="IPR007630">
    <property type="entry name" value="RNA_pol_sigma70_r4"/>
</dbReference>
<dbReference type="InterPro" id="IPR013325">
    <property type="entry name" value="RNA_pol_sigma_r2"/>
</dbReference>
<dbReference type="InterPro" id="IPR013324">
    <property type="entry name" value="RNA_pol_sigma_r3/r4-like"/>
</dbReference>
<dbReference type="InterPro" id="IPR012761">
    <property type="entry name" value="RNA_pol_sigma_RpoS"/>
</dbReference>
<dbReference type="InterPro" id="IPR050239">
    <property type="entry name" value="Sigma-70_RNA_pol_init_factors"/>
</dbReference>
<dbReference type="InterPro" id="IPR036388">
    <property type="entry name" value="WH-like_DNA-bd_sf"/>
</dbReference>
<dbReference type="NCBIfam" id="NF004207">
    <property type="entry name" value="PRK05657.1"/>
    <property type="match status" value="1"/>
</dbReference>
<dbReference type="NCBIfam" id="TIGR02394">
    <property type="entry name" value="rpoS_proteo"/>
    <property type="match status" value="1"/>
</dbReference>
<dbReference type="NCBIfam" id="TIGR02937">
    <property type="entry name" value="sigma70-ECF"/>
    <property type="match status" value="1"/>
</dbReference>
<dbReference type="PANTHER" id="PTHR30603">
    <property type="entry name" value="RNA POLYMERASE SIGMA FACTOR RPO"/>
    <property type="match status" value="1"/>
</dbReference>
<dbReference type="PANTHER" id="PTHR30603:SF67">
    <property type="entry name" value="RNA POLYMERASE SIGMA FACTOR RPOS"/>
    <property type="match status" value="1"/>
</dbReference>
<dbReference type="Pfam" id="PF00140">
    <property type="entry name" value="Sigma70_r1_2"/>
    <property type="match status" value="1"/>
</dbReference>
<dbReference type="Pfam" id="PF04542">
    <property type="entry name" value="Sigma70_r2"/>
    <property type="match status" value="1"/>
</dbReference>
<dbReference type="Pfam" id="PF04539">
    <property type="entry name" value="Sigma70_r3"/>
    <property type="match status" value="1"/>
</dbReference>
<dbReference type="Pfam" id="PF04545">
    <property type="entry name" value="Sigma70_r4"/>
    <property type="match status" value="1"/>
</dbReference>
<dbReference type="PRINTS" id="PR00046">
    <property type="entry name" value="SIGMA70FCT"/>
</dbReference>
<dbReference type="SUPFAM" id="SSF88946">
    <property type="entry name" value="Sigma2 domain of RNA polymerase sigma factors"/>
    <property type="match status" value="1"/>
</dbReference>
<dbReference type="SUPFAM" id="SSF88659">
    <property type="entry name" value="Sigma3 and sigma4 domains of RNA polymerase sigma factors"/>
    <property type="match status" value="2"/>
</dbReference>
<dbReference type="PROSITE" id="PS00715">
    <property type="entry name" value="SIGMA70_1"/>
    <property type="match status" value="1"/>
</dbReference>
<dbReference type="PROSITE" id="PS00716">
    <property type="entry name" value="SIGMA70_2"/>
    <property type="match status" value="1"/>
</dbReference>
<organism>
    <name type="scientific">Salmonella typhimurium (strain LT2 / SGSC1412 / ATCC 700720)</name>
    <dbReference type="NCBI Taxonomy" id="99287"/>
    <lineage>
        <taxon>Bacteria</taxon>
        <taxon>Pseudomonadati</taxon>
        <taxon>Pseudomonadota</taxon>
        <taxon>Gammaproteobacteria</taxon>
        <taxon>Enterobacterales</taxon>
        <taxon>Enterobacteriaceae</taxon>
        <taxon>Salmonella</taxon>
    </lineage>
</organism>
<accession>P0DM81</accession>
<accession>P0A2E5</accession>
<accession>P37400</accession>
<accession>P39699</accession>
<accession>Q56132</accession>
<accession>Q93V26</accession>
<accession>Q9RN87</accession>
<accession>Q9RN91</accession>
<accession>Q9RN92</accession>
<accession>Q9RN93</accession>
<comment type="function">
    <text evidence="1">Sigma factors are initiation factors that promote the attachment of RNA polymerase to specific initiation sites and are then released. This sigma factor is the master transcriptional regulator of the stationary phase and the general stress response.</text>
</comment>
<comment type="subunit">
    <text evidence="1">Interacts with the RNA polymerase core enzyme.</text>
</comment>
<comment type="subcellular location">
    <subcellularLocation>
        <location evidence="1">Cytoplasm</location>
    </subcellularLocation>
</comment>
<comment type="disruption phenotype">
    <text evidence="2 3">Decreases expression of genes encoding virulence proteins (PubMed:19229334). In strain JSG210 wild-type growth rate and motility, slightly increased biofilm production in vitro, does not persist in inoculated tomato cotyledons (cv. Tiny Tim seedlings) (PubMed:36394339). Wild-type strain JSG210 has high persistence in tomato plant organs; fresh produce contaminated with Salmonella contributes to food safety risks (PubMed:36394339). Decreases virulence in mouse (PubMed:19229334).</text>
</comment>
<comment type="similarity">
    <text evidence="1">Belongs to the sigma-70 factor family. RpoS subfamily.</text>
</comment>
<name>RPOS_SALTY</name>
<evidence type="ECO:0000255" key="1">
    <source>
        <dbReference type="HAMAP-Rule" id="MF_00959"/>
    </source>
</evidence>
<evidence type="ECO:0000269" key="2">
    <source>
    </source>
</evidence>
<evidence type="ECO:0000269" key="3">
    <source>
    </source>
</evidence>
<evidence type="ECO:0000303" key="4">
    <source>
    </source>
</evidence>
<reference key="1">
    <citation type="journal article" date="1994" name="J. Bacteriol.">
        <title>The Salmonella typhimurium katF (rpoS) gene: cloning, nucleotide sequence, and regulation of spvR and spvABCD virulence plasmid genes.</title>
        <authorList>
            <person name="Kowarz L."/>
            <person name="Coynault C."/>
            <person name="Robbe-Saule V."/>
            <person name="Norel F."/>
        </authorList>
    </citation>
    <scope>NUCLEOTIDE SEQUENCE [GENOMIC DNA]</scope>
    <source>
        <strain>C52</strain>
    </source>
</reference>
<reference key="2">
    <citation type="journal article" date="2000" name="J. Bacteriol.">
        <title>rpoS mutants in archival cultures of Salmonella enterica serovar typhimurium.</title>
        <authorList>
            <person name="Sutton A."/>
            <person name="Buencamino R."/>
            <person name="Eisenstark A."/>
        </authorList>
    </citation>
    <scope>NUCLEOTIDE SEQUENCE [GENOMIC DNA]</scope>
    <source>
        <strain>1595</strain>
        <strain>1674</strain>
        <strain>1704</strain>
        <strain>1706</strain>
        <strain>1747</strain>
    </source>
</reference>
<reference key="3">
    <citation type="journal article" date="2001" name="Nature">
        <title>Complete genome sequence of Salmonella enterica serovar Typhimurium LT2.</title>
        <authorList>
            <person name="McClelland M."/>
            <person name="Sanderson K.E."/>
            <person name="Spieth J."/>
            <person name="Clifton S.W."/>
            <person name="Latreille P."/>
            <person name="Courtney L."/>
            <person name="Porwollik S."/>
            <person name="Ali J."/>
            <person name="Dante M."/>
            <person name="Du F."/>
            <person name="Hou S."/>
            <person name="Layman D."/>
            <person name="Leonard S."/>
            <person name="Nguyen C."/>
            <person name="Scott K."/>
            <person name="Holmes A."/>
            <person name="Grewal N."/>
            <person name="Mulvaney E."/>
            <person name="Ryan E."/>
            <person name="Sun H."/>
            <person name="Florea L."/>
            <person name="Miller W."/>
            <person name="Stoneking T."/>
            <person name="Nhan M."/>
            <person name="Waterston R."/>
            <person name="Wilson R.K."/>
        </authorList>
    </citation>
    <scope>NUCLEOTIDE SEQUENCE [LARGE SCALE GENOMIC DNA]</scope>
    <source>
        <strain>LT2 / SGSC1412 / ATCC 700720</strain>
    </source>
</reference>
<reference key="4">
    <citation type="journal article" date="2009" name="PLoS Pathog.">
        <title>Coordinated regulation of virulence during systemic infection of Salmonella enterica serovar Typhimurium.</title>
        <authorList>
            <person name="Yoon H."/>
            <person name="McDermott J.E."/>
            <person name="Porwollik S."/>
            <person name="McClelland M."/>
            <person name="Heffron F."/>
        </authorList>
    </citation>
    <scope>DISRUPTION PHENOTYPE</scope>
    <source>
        <strain evidence="4">14028s / SGSC 2262</strain>
    </source>
</reference>
<reference key="5">
    <citation type="journal article" date="2023" name="Mol. Plant Microbe Interact.">
        <title>Role of Stress-Induced Proteins RpoS and YicC in the Persistence of Salmonella enterica subsp. enterica Serotype Typhimurium in Tomato Plants.</title>
        <authorList>
            <person name="Deblais L."/>
            <person name="Ranjit S."/>
            <person name="Vrisman C."/>
            <person name="Antony L."/>
            <person name="Scaria J."/>
            <person name="Miller S.A."/>
            <person name="Rajashekara G."/>
        </authorList>
    </citation>
    <scope>DISRUPTION PHENOTYPE</scope>
    <source>
        <strain>JSG210</strain>
    </source>
</reference>
<gene>
    <name evidence="1" type="primary">rpoS</name>
    <name type="synonym">katF</name>
    <name type="ordered locus">STM2924</name>
</gene>
<protein>
    <recommendedName>
        <fullName evidence="1">RNA polymerase sigma factor RpoS</fullName>
    </recommendedName>
    <alternativeName>
        <fullName evidence="1">Sigma S</fullName>
    </alternativeName>
    <alternativeName>
        <fullName evidence="1">Sigma-38</fullName>
    </alternativeName>
</protein>
<feature type="chain" id="PRO_0000093973" description="RNA polymerase sigma factor RpoS">
    <location>
        <begin position="1"/>
        <end position="330"/>
    </location>
</feature>
<feature type="DNA-binding region" description="H-T-H motif" evidence="1">
    <location>
        <begin position="288"/>
        <end position="307"/>
    </location>
</feature>
<feature type="region of interest" description="Sigma-70 factor domain-1" evidence="1">
    <location>
        <begin position="56"/>
        <end position="89"/>
    </location>
</feature>
<feature type="region of interest" description="Sigma-70 factor domain-2" evidence="1">
    <location>
        <begin position="94"/>
        <end position="164"/>
    </location>
</feature>
<feature type="region of interest" description="Sigma-70 factor domain-3" evidence="1">
    <location>
        <begin position="174"/>
        <end position="249"/>
    </location>
</feature>
<feature type="region of interest" description="Sigma-70 factor domain-4" evidence="1">
    <location>
        <begin position="262"/>
        <end position="315"/>
    </location>
</feature>
<feature type="short sequence motif" description="Interaction with polymerase core subunit RpoC">
    <location>
        <begin position="118"/>
        <end position="121"/>
    </location>
</feature>
<feature type="sequence variant" description="In strain: 1674.">
    <original>E</original>
    <variation>D</variation>
    <location>
        <position position="33"/>
    </location>
</feature>
<feature type="sequence variant" description="In strain: 1706.">
    <original>E</original>
    <variation>Q</variation>
    <location>
        <position position="132"/>
    </location>
</feature>
<feature type="sequence variant" description="In strain: 1747.">
    <location>
        <begin position="166"/>
        <end position="169"/>
    </location>
</feature>
<feature type="sequence variant" description="In strain: 1595.">
    <original>R</original>
    <variation>C</variation>
    <location>
        <position position="299"/>
    </location>
</feature>
<keyword id="KW-0963">Cytoplasm</keyword>
<keyword id="KW-0238">DNA-binding</keyword>
<keyword id="KW-1185">Reference proteome</keyword>
<keyword id="KW-0731">Sigma factor</keyword>
<keyword id="KW-0346">Stress response</keyword>
<keyword id="KW-0804">Transcription</keyword>
<keyword id="KW-0805">Transcription regulation</keyword>
<proteinExistence type="inferred from homology"/>
<sequence>MSQNTLKVHDLNEDAEFDENGVEAFDEKALSEEEPSDNDLAEEELLSQGATQRVLDATQLYLGEIGYSPLLTAEEEVYFARRALRGDVASRRRMIESNLRLVVKIARRYGNRGLALLDLIEEGNLGLIRAVEKFDPERGFRFSTYATWWIRQTIERAIMNQTRTIRLPIHIVKELNVYLRTARELSHKLDHEPSAEEIAEQLDKPVDDVSRMLRLNERITSVDTPLGGDSEKALLDILADEKENGPEDTTQDDDMKQSIVKWLFELNAKQREVLARRFGLLGYEAATLEDVGREIGLTRERVRQIQVEGLRRLREILQTQGLNIEALFRE</sequence>